<reference key="1">
    <citation type="journal article" date="2004" name="Genome Res.">
        <title>The status, quality, and expansion of the NIH full-length cDNA project: the Mammalian Gene Collection (MGC).</title>
        <authorList>
            <consortium name="The MGC Project Team"/>
        </authorList>
    </citation>
    <scope>NUCLEOTIDE SEQUENCE [LARGE SCALE MRNA]</scope>
    <source>
        <tissue>Testis</tissue>
    </source>
</reference>
<name>SAXO1_RAT</name>
<protein>
    <recommendedName>
        <fullName>Stabilizer of axonemal microtubules 1</fullName>
    </recommendedName>
</protein>
<comment type="function">
    <text evidence="1">May play a role in the regulation of cilium length. Stabilizes microtubules at low temperature.</text>
</comment>
<comment type="subunit">
    <text evidence="1">Associates with microtubules via the Mn regions.</text>
</comment>
<comment type="subcellular location">
    <subcellularLocation>
        <location evidence="1">Cytoplasm</location>
        <location evidence="1">Cytoskeleton</location>
        <location evidence="1">Microtubule organizing center</location>
        <location evidence="1">Centrosome</location>
        <location evidence="1">Centriole</location>
    </subcellularLocation>
    <subcellularLocation>
        <location evidence="1">Cytoplasm</location>
        <location evidence="1">Cytoskeleton</location>
        <location evidence="1">Cilium basal body</location>
    </subcellularLocation>
    <subcellularLocation>
        <location evidence="1">Cytoplasm</location>
        <location evidence="1">Cytoskeleton</location>
        <location evidence="1">Cilium axoneme</location>
    </subcellularLocation>
    <subcellularLocation>
        <location evidence="1">Cytoplasm</location>
        <location evidence="1">Cytoskeleton</location>
        <location evidence="1">Microtubule organizing center</location>
        <location evidence="1">Centrosome</location>
    </subcellularLocation>
    <text evidence="1">In multi-ciliated cells, localizes to the basal bodies and in non-ciliated cells, to the centrosome. In spermatozoa, colocalizes with microtubules along the length of the axoneme from its proximal end to its distal tip and with tubulin at the distal end of the flagellum and at the proximal centriole.</text>
</comment>
<comment type="domain">
    <text evidence="1">The Mn regions are involved in microtubule-binding and stabilization at low temperature. They are required and sufficient for cilium targeting.</text>
</comment>
<comment type="domain">
    <text evidence="1">The N-terminal region (residues 1-29) might play a role in centriole retention.</text>
</comment>
<comment type="similarity">
    <text evidence="2">Belongs to the FAM154 family.</text>
</comment>
<gene>
    <name type="primary">Saxo1</name>
    <name type="synonym">Fam154a</name>
</gene>
<evidence type="ECO:0000250" key="1">
    <source>
        <dbReference type="UniProtKB" id="Q8IYX7"/>
    </source>
</evidence>
<evidence type="ECO:0000305" key="2"/>
<sequence length="462" mass="53265">MNRKCICDLCSCGKHHCPHLPTKIYEKTEKPCFFSEYTEKYPTYLSYVPRESFKPKLEYQKVNIPMEGLSTTKRDFGTFNIVPVKHHLPEKATPIQDEMDFLTTYNQHYNYCPANRVNPIKPRDNKHQCNDKMECVPTYKADYLPWNQQKRSSIRPPQSYRPASCRFDHRTTHQDDYPIKNPVDTVSYKPPHGPKLCNIPLESMTSYKSSYVAHPMEKRCVYEGEKYKPSEVPFDSLTTHKDSYRGLIGEPAKTWKPAPNHPGLDIPFPSNTEFREKFQPWPTPKIVPKESIAYIPPEGKMDLLTTVQADYKCPNGVPAQSCRPVIHLKKSDRFESSTTNREDFKHWANIRREPVKPNHQLKFSDEPMEYMTTNRAHYVPHAPANTKSCKPTWSGPRVNIPLEGQTTYSTSFTPKEIQRCPASYPEPPGYIFDEVDAVGHRLYRPASGATSQESNHLGFGDA</sequence>
<keyword id="KW-0966">Cell projection</keyword>
<keyword id="KW-0970">Cilium biogenesis/degradation</keyword>
<keyword id="KW-0963">Cytoplasm</keyword>
<keyword id="KW-0206">Cytoskeleton</keyword>
<keyword id="KW-1185">Reference proteome</keyword>
<keyword id="KW-0677">Repeat</keyword>
<organism>
    <name type="scientific">Rattus norvegicus</name>
    <name type="common">Rat</name>
    <dbReference type="NCBI Taxonomy" id="10116"/>
    <lineage>
        <taxon>Eukaryota</taxon>
        <taxon>Metazoa</taxon>
        <taxon>Chordata</taxon>
        <taxon>Craniata</taxon>
        <taxon>Vertebrata</taxon>
        <taxon>Euteleostomi</taxon>
        <taxon>Mammalia</taxon>
        <taxon>Eutheria</taxon>
        <taxon>Euarchontoglires</taxon>
        <taxon>Glires</taxon>
        <taxon>Rodentia</taxon>
        <taxon>Myomorpha</taxon>
        <taxon>Muroidea</taxon>
        <taxon>Muridae</taxon>
        <taxon>Murinae</taxon>
        <taxon>Rattus</taxon>
    </lineage>
</organism>
<dbReference type="EMBL" id="BC078965">
    <property type="protein sequence ID" value="AAH78965.1"/>
    <property type="molecule type" value="mRNA"/>
</dbReference>
<dbReference type="RefSeq" id="NP_001014134.2">
    <property type="nucleotide sequence ID" value="NM_001014112.2"/>
</dbReference>
<dbReference type="STRING" id="10116.ENSRNOP00000055963"/>
<dbReference type="GlyGen" id="Q6AYP6">
    <property type="glycosylation" value="1 site"/>
</dbReference>
<dbReference type="PhosphoSitePlus" id="Q6AYP6"/>
<dbReference type="PaxDb" id="10116-ENSRNOP00000055963"/>
<dbReference type="GeneID" id="317471"/>
<dbReference type="KEGG" id="rno:317471"/>
<dbReference type="UCSC" id="RGD:1549779">
    <property type="organism name" value="rat"/>
</dbReference>
<dbReference type="AGR" id="RGD:1549779"/>
<dbReference type="CTD" id="317471"/>
<dbReference type="RGD" id="1549779">
    <property type="gene designation" value="Saxo1"/>
</dbReference>
<dbReference type="eggNOG" id="ENOG502QWHB">
    <property type="taxonomic scope" value="Eukaryota"/>
</dbReference>
<dbReference type="InParanoid" id="Q6AYP6"/>
<dbReference type="OrthoDB" id="10126at9989"/>
<dbReference type="PhylomeDB" id="Q6AYP6"/>
<dbReference type="TreeFam" id="TF319394"/>
<dbReference type="PRO" id="PR:Q6AYP6"/>
<dbReference type="Proteomes" id="UP000002494">
    <property type="component" value="Unplaced"/>
</dbReference>
<dbReference type="GO" id="GO:0005879">
    <property type="term" value="C:axonemal microtubule"/>
    <property type="evidence" value="ECO:0000250"/>
    <property type="project" value="UniProtKB"/>
</dbReference>
<dbReference type="GO" id="GO:0005814">
    <property type="term" value="C:centriole"/>
    <property type="evidence" value="ECO:0000250"/>
    <property type="project" value="UniProtKB"/>
</dbReference>
<dbReference type="GO" id="GO:0005813">
    <property type="term" value="C:centrosome"/>
    <property type="evidence" value="ECO:0007669"/>
    <property type="project" value="UniProtKB-SubCell"/>
</dbReference>
<dbReference type="GO" id="GO:0036064">
    <property type="term" value="C:ciliary basal body"/>
    <property type="evidence" value="ECO:0000250"/>
    <property type="project" value="UniProtKB"/>
</dbReference>
<dbReference type="GO" id="GO:0005856">
    <property type="term" value="C:cytoskeleton"/>
    <property type="evidence" value="ECO:0000318"/>
    <property type="project" value="GO_Central"/>
</dbReference>
<dbReference type="GO" id="GO:0031514">
    <property type="term" value="C:motile cilium"/>
    <property type="evidence" value="ECO:0000250"/>
    <property type="project" value="UniProtKB"/>
</dbReference>
<dbReference type="GO" id="GO:0036126">
    <property type="term" value="C:sperm flagellum"/>
    <property type="evidence" value="ECO:0000250"/>
    <property type="project" value="UniProtKB"/>
</dbReference>
<dbReference type="GO" id="GO:0008017">
    <property type="term" value="F:microtubule binding"/>
    <property type="evidence" value="ECO:0000250"/>
    <property type="project" value="UniProtKB"/>
</dbReference>
<dbReference type="GO" id="GO:0030030">
    <property type="term" value="P:cell projection organization"/>
    <property type="evidence" value="ECO:0007669"/>
    <property type="project" value="UniProtKB-KW"/>
</dbReference>
<dbReference type="GO" id="GO:0070417">
    <property type="term" value="P:cellular response to cold"/>
    <property type="evidence" value="ECO:0000250"/>
    <property type="project" value="UniProtKB"/>
</dbReference>
<dbReference type="GO" id="GO:0009631">
    <property type="term" value="P:cold acclimation"/>
    <property type="evidence" value="ECO:0000250"/>
    <property type="project" value="UniProtKB"/>
</dbReference>
<dbReference type="GO" id="GO:0045724">
    <property type="term" value="P:positive regulation of cilium assembly"/>
    <property type="evidence" value="ECO:0000250"/>
    <property type="project" value="UniProtKB"/>
</dbReference>
<dbReference type="GO" id="GO:0050821">
    <property type="term" value="P:protein stabilization"/>
    <property type="evidence" value="ECO:0000250"/>
    <property type="project" value="UniProtKB"/>
</dbReference>
<dbReference type="InterPro" id="IPR033336">
    <property type="entry name" value="SAXO1/2"/>
</dbReference>
<dbReference type="PANTHER" id="PTHR31516:SF9">
    <property type="entry name" value="STABILIZER OF AXONEMAL MICROTUBULES 1"/>
    <property type="match status" value="1"/>
</dbReference>
<dbReference type="PANTHER" id="PTHR31516">
    <property type="entry name" value="STABILIZER OF AXONEMAL MICROTUBULES 2"/>
    <property type="match status" value="1"/>
</dbReference>
<dbReference type="Pfam" id="PF05217">
    <property type="entry name" value="SAXO1-2"/>
    <property type="match status" value="1"/>
</dbReference>
<feature type="chain" id="PRO_0000089739" description="Stabilizer of axonemal microtubules 1">
    <location>
        <begin position="1"/>
        <end position="462"/>
    </location>
</feature>
<feature type="region of interest" description="Mn 1" evidence="1">
    <location>
        <begin position="30"/>
        <end position="64"/>
    </location>
</feature>
<feature type="region of interest" description="Mn 2" evidence="1">
    <location>
        <begin position="65"/>
        <end position="97"/>
    </location>
</feature>
<feature type="region of interest" description="Mn 3" evidence="1">
    <location>
        <begin position="98"/>
        <end position="131"/>
    </location>
</feature>
<feature type="region of interest" description="Mn 4" evidence="1">
    <location>
        <begin position="132"/>
        <end position="165"/>
    </location>
</feature>
<feature type="region of interest" description="Mn 5" evidence="1">
    <location>
        <begin position="166"/>
        <end position="199"/>
    </location>
</feature>
<feature type="region of interest" description="Mn 6" evidence="1">
    <location>
        <begin position="200"/>
        <end position="232"/>
    </location>
</feature>
<feature type="region of interest" description="Mn 7" evidence="1">
    <location>
        <begin position="233"/>
        <end position="266"/>
    </location>
</feature>
<feature type="region of interest" description="Mn 8" evidence="1">
    <location>
        <begin position="267"/>
        <end position="299"/>
    </location>
</feature>
<feature type="region of interest" description="Mn 9" evidence="1">
    <location>
        <begin position="300"/>
        <end position="332"/>
    </location>
</feature>
<feature type="region of interest" description="Mn 10" evidence="1">
    <location>
        <begin position="333"/>
        <end position="366"/>
    </location>
</feature>
<feature type="region of interest" description="Mn 12" evidence="1">
    <location>
        <begin position="367"/>
        <end position="400"/>
    </location>
</feature>
<feature type="region of interest" description="Mn 12" evidence="1">
    <location>
        <begin position="401"/>
        <end position="434"/>
    </location>
</feature>
<proteinExistence type="evidence at transcript level"/>
<accession>Q6AYP6</accession>